<organism>
    <name type="scientific">Escherichia coli O8 (strain IAI1)</name>
    <dbReference type="NCBI Taxonomy" id="585034"/>
    <lineage>
        <taxon>Bacteria</taxon>
        <taxon>Pseudomonadati</taxon>
        <taxon>Pseudomonadota</taxon>
        <taxon>Gammaproteobacteria</taxon>
        <taxon>Enterobacterales</taxon>
        <taxon>Enterobacteriaceae</taxon>
        <taxon>Escherichia</taxon>
    </lineage>
</organism>
<sequence>MDMDLNNRLTEDETLEQAYDIFLELAADNLDPADVLLFNLQFEERGGAELFDPAEDWQEHVDFDLNPDFFAEVVIGLADSEDGEINDVFARILLCREKDHKLCHIIWRE</sequence>
<dbReference type="EMBL" id="CU928160">
    <property type="protein sequence ID" value="CAQ98126.1"/>
    <property type="molecule type" value="Genomic_DNA"/>
</dbReference>
<dbReference type="RefSeq" id="WP_000366959.1">
    <property type="nucleotide sequence ID" value="NC_011741.1"/>
</dbReference>
<dbReference type="SMR" id="B7LY03"/>
<dbReference type="KEGG" id="ecr:ECIAI1_1267"/>
<dbReference type="HOGENOM" id="CLU_143392_0_0_6"/>
<dbReference type="Gene3D" id="3.10.450.140">
    <property type="entry name" value="dsDNA mimic, putative"/>
    <property type="match status" value="1"/>
</dbReference>
<dbReference type="HAMAP" id="MF_00680">
    <property type="entry name" value="Put_dsDNA_mimic"/>
    <property type="match status" value="1"/>
</dbReference>
<dbReference type="InterPro" id="IPR007376">
    <property type="entry name" value="dsDNA_mimic_put"/>
</dbReference>
<dbReference type="InterPro" id="IPR036763">
    <property type="entry name" value="Put_dsDNA_mimic_sf"/>
</dbReference>
<dbReference type="NCBIfam" id="NF003469">
    <property type="entry name" value="PRK05094.1"/>
    <property type="match status" value="1"/>
</dbReference>
<dbReference type="Pfam" id="PF04269">
    <property type="entry name" value="DUF440"/>
    <property type="match status" value="1"/>
</dbReference>
<dbReference type="PIRSF" id="PIRSF004916">
    <property type="entry name" value="UCP004916"/>
    <property type="match status" value="1"/>
</dbReference>
<dbReference type="SUPFAM" id="SSF102816">
    <property type="entry name" value="Putative dsDNA mimic"/>
    <property type="match status" value="1"/>
</dbReference>
<gene>
    <name evidence="1" type="primary">yciU</name>
    <name type="ordered locus">ECIAI1_1267</name>
</gene>
<protein>
    <recommendedName>
        <fullName evidence="1">Putative double-stranded DNA mimic protein YciU</fullName>
    </recommendedName>
</protein>
<feature type="chain" id="PRO_1000131703" description="Putative double-stranded DNA mimic protein YciU">
    <location>
        <begin position="1"/>
        <end position="109"/>
    </location>
</feature>
<comment type="function">
    <text evidence="1">May act as a double-stranded DNA (dsDNA) mimic. Probably regulates the activity of a dsDNA-binding protein.</text>
</comment>
<comment type="similarity">
    <text evidence="1">Belongs to the putative dsDNA mimic protein family.</text>
</comment>
<evidence type="ECO:0000255" key="1">
    <source>
        <dbReference type="HAMAP-Rule" id="MF_00680"/>
    </source>
</evidence>
<reference key="1">
    <citation type="journal article" date="2009" name="PLoS Genet.">
        <title>Organised genome dynamics in the Escherichia coli species results in highly diverse adaptive paths.</title>
        <authorList>
            <person name="Touchon M."/>
            <person name="Hoede C."/>
            <person name="Tenaillon O."/>
            <person name="Barbe V."/>
            <person name="Baeriswyl S."/>
            <person name="Bidet P."/>
            <person name="Bingen E."/>
            <person name="Bonacorsi S."/>
            <person name="Bouchier C."/>
            <person name="Bouvet O."/>
            <person name="Calteau A."/>
            <person name="Chiapello H."/>
            <person name="Clermont O."/>
            <person name="Cruveiller S."/>
            <person name="Danchin A."/>
            <person name="Diard M."/>
            <person name="Dossat C."/>
            <person name="Karoui M.E."/>
            <person name="Frapy E."/>
            <person name="Garry L."/>
            <person name="Ghigo J.M."/>
            <person name="Gilles A.M."/>
            <person name="Johnson J."/>
            <person name="Le Bouguenec C."/>
            <person name="Lescat M."/>
            <person name="Mangenot S."/>
            <person name="Martinez-Jehanne V."/>
            <person name="Matic I."/>
            <person name="Nassif X."/>
            <person name="Oztas S."/>
            <person name="Petit M.A."/>
            <person name="Pichon C."/>
            <person name="Rouy Z."/>
            <person name="Ruf C.S."/>
            <person name="Schneider D."/>
            <person name="Tourret J."/>
            <person name="Vacherie B."/>
            <person name="Vallenet D."/>
            <person name="Medigue C."/>
            <person name="Rocha E.P.C."/>
            <person name="Denamur E."/>
        </authorList>
    </citation>
    <scope>NUCLEOTIDE SEQUENCE [LARGE SCALE GENOMIC DNA]</scope>
    <source>
        <strain>IAI1</strain>
    </source>
</reference>
<accession>B7LY03</accession>
<proteinExistence type="inferred from homology"/>
<name>YCIU_ECO8A</name>